<reference key="1">
    <citation type="journal article" date="1990" name="J. Biol. Chem.">
        <title>A single exon codes for the enzyme domain of a protozoan cysteine protease.</title>
        <authorList>
            <person name="Nene V."/>
            <person name="Gobright E."/>
            <person name="Musoke A.J."/>
            <person name="Lonsdale-Eccles J.D."/>
        </authorList>
    </citation>
    <scope>NUCLEOTIDE SEQUENCE [GENOMIC DNA]</scope>
</reference>
<reference key="2">
    <citation type="journal article" date="2005" name="Science">
        <title>Genome sequence of Theileria parva, a bovine pathogen that transforms lymphocytes.</title>
        <authorList>
            <person name="Gardner M.J."/>
            <person name="Bishop R."/>
            <person name="Shah T."/>
            <person name="de Villiers E.P."/>
            <person name="Carlton J.M."/>
            <person name="Hall N."/>
            <person name="Ren Q."/>
            <person name="Paulsen I.T."/>
            <person name="Pain A."/>
            <person name="Berriman M."/>
            <person name="Wilson R.J.M."/>
            <person name="Sato S."/>
            <person name="Ralph S.A."/>
            <person name="Mann D.J."/>
            <person name="Xiong Z."/>
            <person name="Shallom S.J."/>
            <person name="Weidman J."/>
            <person name="Jiang L."/>
            <person name="Lynn J."/>
            <person name="Weaver B."/>
            <person name="Shoaibi A."/>
            <person name="Domingo A.R."/>
            <person name="Wasawo D."/>
            <person name="Crabtree J."/>
            <person name="Wortman J.R."/>
            <person name="Haas B."/>
            <person name="Angiuoli S.V."/>
            <person name="Creasy T.H."/>
            <person name="Lu C."/>
            <person name="Suh B."/>
            <person name="Silva J.C."/>
            <person name="Utterback T.R."/>
            <person name="Feldblyum T.V."/>
            <person name="Pertea M."/>
            <person name="Allen J."/>
            <person name="Nierman W.C."/>
            <person name="Taracha E.L.N."/>
            <person name="Salzberg S.L."/>
            <person name="White O.R."/>
            <person name="Fitzhugh H.A."/>
            <person name="Morzaria S."/>
            <person name="Venter J.C."/>
            <person name="Fraser C.M."/>
            <person name="Nene V."/>
        </authorList>
    </citation>
    <scope>NUCLEOTIDE SEQUENCE [LARGE SCALE GENOMIC DNA]</scope>
    <source>
        <strain>Muguga</strain>
    </source>
</reference>
<reference key="3">
    <citation type="journal article" date="1992" name="Mol. Biochem. Parasitol.">
        <title>Characterisation of the gene encoding a candidate vaccine antigen of Theileria parva sporozoites.</title>
        <authorList>
            <person name="Nene V."/>
            <person name="Iams K.P."/>
            <person name="Gobright E."/>
            <person name="Musoke A.J."/>
        </authorList>
    </citation>
    <scope>NUCLEOTIDE SEQUENCE [GENOMIC DNA] OF 179-440</scope>
    <source>
        <strain>Muguga</strain>
    </source>
</reference>
<keyword id="KW-1015">Disulfide bond</keyword>
<keyword id="KW-0325">Glycoprotein</keyword>
<keyword id="KW-0378">Hydrolase</keyword>
<keyword id="KW-0645">Protease</keyword>
<keyword id="KW-1185">Reference proteome</keyword>
<keyword id="KW-0732">Signal</keyword>
<keyword id="KW-0788">Thiol protease</keyword>
<keyword id="KW-0865">Zymogen</keyword>
<name>CYSP_THEPA</name>
<evidence type="ECO:0000250" key="1"/>
<evidence type="ECO:0000255" key="2"/>
<evidence type="ECO:0000255" key="3">
    <source>
        <dbReference type="PROSITE-ProRule" id="PRU10088"/>
    </source>
</evidence>
<evidence type="ECO:0000255" key="4">
    <source>
        <dbReference type="PROSITE-ProRule" id="PRU10089"/>
    </source>
</evidence>
<evidence type="ECO:0000255" key="5">
    <source>
        <dbReference type="PROSITE-ProRule" id="PRU10090"/>
    </source>
</evidence>
<evidence type="ECO:0000305" key="6"/>
<protein>
    <recommendedName>
        <fullName>Cysteine proteinase</fullName>
        <ecNumber>3.4.22.-</ecNumber>
    </recommendedName>
</protein>
<accession>P22497</accession>
<accession>Q4MZ80</accession>
<feature type="signal peptide" evidence="2">
    <location>
        <begin position="1"/>
        <end position="60"/>
    </location>
</feature>
<feature type="propeptide" id="PRO_0000026390" description="Activation peptide">
    <location>
        <begin position="61"/>
        <end position="229"/>
    </location>
</feature>
<feature type="chain" id="PRO_0000026391" description="Cysteine proteinase">
    <location>
        <begin position="230"/>
        <end position="440"/>
    </location>
</feature>
<feature type="region of interest" description="Involved in processing to yield active enzymes" evidence="1">
    <location>
        <begin position="166"/>
        <end position="182"/>
    </location>
</feature>
<feature type="active site" evidence="1">
    <location>
        <position position="253"/>
    </location>
</feature>
<feature type="active site" evidence="1">
    <location>
        <position position="382"/>
    </location>
</feature>
<feature type="active site" evidence="1">
    <location>
        <position position="404"/>
    </location>
</feature>
<feature type="glycosylation site" description="N-linked (GlcNAc...) asparagine" evidence="2">
    <location>
        <position position="206"/>
    </location>
</feature>
<feature type="disulfide bond" evidence="1">
    <location>
        <begin position="250"/>
        <end position="291"/>
    </location>
</feature>
<feature type="sequence conflict" description="In Ref. 1." evidence="6" ref="1">
    <original>YS</original>
    <variation>V</variation>
    <location>
        <begin position="2"/>
        <end position="3"/>
    </location>
</feature>
<sequence length="440" mass="50331">MYSSSVVSNPNERLVNNRVENDLESSDDTLSTQAKPVSRLLTRKLLLGVVVLFFLAGVSVVSYFLFSKYKMLNKFKRELDDHLTKDFPNLERSKRDTCFDELTRLFGDGFLSDDPKLEYEVYREFEEFNSKYNRRHATQQERLNRLVTFRSNYLEVKEQKGDEPYVKGINRFSDLTEREFYKLFPVMKPPKATYSNGYYLLSHMANKTYLKNLKKALNTDEDVDLAKLTGENLDWRRSSSVTSVKDQSNCGGCWAFSTVGSVEGYYMSHFDKSYELSVQELLDCDSFSNGCQGGLLESAYEYVRKYGLVSAKDLPFVDKARRCSVPKAKKVSVPSYHVFKGKEVMTRSLTSSPCSVYLSVSPELAKYKSGVFTGECGKSLNHAVVLVGEGYDEVTKKRYWVVQNSWGTDWGENGYMRLERTNMGTDKCGVLDTSMSAFEL</sequence>
<organism>
    <name type="scientific">Theileria parva</name>
    <name type="common">East coast fever infection agent</name>
    <dbReference type="NCBI Taxonomy" id="5875"/>
    <lineage>
        <taxon>Eukaryota</taxon>
        <taxon>Sar</taxon>
        <taxon>Alveolata</taxon>
        <taxon>Apicomplexa</taxon>
        <taxon>Aconoidasida</taxon>
        <taxon>Piroplasmida</taxon>
        <taxon>Theileriidae</taxon>
        <taxon>Theileria</taxon>
    </lineage>
</organism>
<dbReference type="EC" id="3.4.22.-"/>
<dbReference type="EMBL" id="M37791">
    <property type="protein sequence ID" value="AAA30131.1"/>
    <property type="molecule type" value="Genomic_DNA"/>
</dbReference>
<dbReference type="EMBL" id="AAGK01000005">
    <property type="protein sequence ID" value="EAN31020.1"/>
    <property type="molecule type" value="Genomic_DNA"/>
</dbReference>
<dbReference type="EMBL" id="M67476">
    <property type="protein sequence ID" value="AAA98600.1"/>
    <property type="molecule type" value="Genomic_DNA"/>
</dbReference>
<dbReference type="PIR" id="A36083">
    <property type="entry name" value="KHQBTT"/>
</dbReference>
<dbReference type="RefSeq" id="XP_763303.1">
    <property type="nucleotide sequence ID" value="XM_758210.1"/>
</dbReference>
<dbReference type="SMR" id="P22497"/>
<dbReference type="STRING" id="5875.P22497"/>
<dbReference type="MEROPS" id="C01.079"/>
<dbReference type="EnsemblProtists" id="EAN31020">
    <property type="protein sequence ID" value="EAN31020"/>
    <property type="gene ID" value="TP03_0285"/>
</dbReference>
<dbReference type="GeneID" id="3500253"/>
<dbReference type="KEGG" id="tpv:TP03_0285"/>
<dbReference type="VEuPathDB" id="PiroplasmaDB:TpMuguga_03g00285"/>
<dbReference type="eggNOG" id="KOG1543">
    <property type="taxonomic scope" value="Eukaryota"/>
</dbReference>
<dbReference type="InParanoid" id="P22497"/>
<dbReference type="OMA" id="HNGEYSE"/>
<dbReference type="Proteomes" id="UP000001949">
    <property type="component" value="Unassembled WGS sequence"/>
</dbReference>
<dbReference type="GO" id="GO:0008234">
    <property type="term" value="F:cysteine-type peptidase activity"/>
    <property type="evidence" value="ECO:0007669"/>
    <property type="project" value="UniProtKB-KW"/>
</dbReference>
<dbReference type="GO" id="GO:0006508">
    <property type="term" value="P:proteolysis"/>
    <property type="evidence" value="ECO:0007669"/>
    <property type="project" value="UniProtKB-KW"/>
</dbReference>
<dbReference type="CDD" id="cd02248">
    <property type="entry name" value="Peptidase_C1A"/>
    <property type="match status" value="1"/>
</dbReference>
<dbReference type="Gene3D" id="3.90.70.10">
    <property type="entry name" value="Cysteine proteinases"/>
    <property type="match status" value="1"/>
</dbReference>
<dbReference type="InterPro" id="IPR038765">
    <property type="entry name" value="Papain-like_cys_pep_sf"/>
</dbReference>
<dbReference type="InterPro" id="IPR025661">
    <property type="entry name" value="Pept_asp_AS"/>
</dbReference>
<dbReference type="InterPro" id="IPR000169">
    <property type="entry name" value="Pept_cys_AS"/>
</dbReference>
<dbReference type="InterPro" id="IPR025660">
    <property type="entry name" value="Pept_his_AS"/>
</dbReference>
<dbReference type="InterPro" id="IPR013128">
    <property type="entry name" value="Peptidase_C1A"/>
</dbReference>
<dbReference type="InterPro" id="IPR000668">
    <property type="entry name" value="Peptidase_C1A_C"/>
</dbReference>
<dbReference type="InterPro" id="IPR039417">
    <property type="entry name" value="Peptidase_C1A_papain-like"/>
</dbReference>
<dbReference type="InterPro" id="IPR013201">
    <property type="entry name" value="Prot_inhib_I29"/>
</dbReference>
<dbReference type="PANTHER" id="PTHR12411">
    <property type="entry name" value="CYSTEINE PROTEASE FAMILY C1-RELATED"/>
    <property type="match status" value="1"/>
</dbReference>
<dbReference type="Pfam" id="PF08246">
    <property type="entry name" value="Inhibitor_I29"/>
    <property type="match status" value="1"/>
</dbReference>
<dbReference type="Pfam" id="PF00112">
    <property type="entry name" value="Peptidase_C1"/>
    <property type="match status" value="1"/>
</dbReference>
<dbReference type="PRINTS" id="PR00705">
    <property type="entry name" value="PAPAIN"/>
</dbReference>
<dbReference type="SMART" id="SM00848">
    <property type="entry name" value="Inhibitor_I29"/>
    <property type="match status" value="1"/>
</dbReference>
<dbReference type="SMART" id="SM00645">
    <property type="entry name" value="Pept_C1"/>
    <property type="match status" value="1"/>
</dbReference>
<dbReference type="SUPFAM" id="SSF54001">
    <property type="entry name" value="Cysteine proteinases"/>
    <property type="match status" value="1"/>
</dbReference>
<dbReference type="PROSITE" id="PS00640">
    <property type="entry name" value="THIOL_PROTEASE_ASN"/>
    <property type="match status" value="1"/>
</dbReference>
<dbReference type="PROSITE" id="PS00139">
    <property type="entry name" value="THIOL_PROTEASE_CYS"/>
    <property type="match status" value="1"/>
</dbReference>
<dbReference type="PROSITE" id="PS00639">
    <property type="entry name" value="THIOL_PROTEASE_HIS"/>
    <property type="match status" value="1"/>
</dbReference>
<gene>
    <name type="ordered locus">TP03_0285</name>
</gene>
<proteinExistence type="inferred from homology"/>
<comment type="similarity">
    <text evidence="3 4 5">Belongs to the peptidase C1 family.</text>
</comment>